<name>CSPH_ECOL6</name>
<protein>
    <recommendedName>
        <fullName>Cold shock-like protein CspH</fullName>
        <shortName>CSP-H</shortName>
    </recommendedName>
</protein>
<organism>
    <name type="scientific">Escherichia coli O6:H1 (strain CFT073 / ATCC 700928 / UPEC)</name>
    <dbReference type="NCBI Taxonomy" id="199310"/>
    <lineage>
        <taxon>Bacteria</taxon>
        <taxon>Pseudomonadati</taxon>
        <taxon>Pseudomonadota</taxon>
        <taxon>Gammaproteobacteria</taxon>
        <taxon>Enterobacterales</taxon>
        <taxon>Enterobacteriaceae</taxon>
        <taxon>Escherichia</taxon>
    </lineage>
</organism>
<keyword id="KW-0010">Activator</keyword>
<keyword id="KW-0963">Cytoplasm</keyword>
<keyword id="KW-0238">DNA-binding</keyword>
<keyword id="KW-1185">Reference proteome</keyword>
<keyword id="KW-0804">Transcription</keyword>
<keyword id="KW-0805">Transcription regulation</keyword>
<reference key="1">
    <citation type="journal article" date="2002" name="Proc. Natl. Acad. Sci. U.S.A.">
        <title>Extensive mosaic structure revealed by the complete genome sequence of uropathogenic Escherichia coli.</title>
        <authorList>
            <person name="Welch R.A."/>
            <person name="Burland V."/>
            <person name="Plunkett G. III"/>
            <person name="Redford P."/>
            <person name="Roesch P."/>
            <person name="Rasko D."/>
            <person name="Buckles E.L."/>
            <person name="Liou S.-R."/>
            <person name="Boutin A."/>
            <person name="Hackett J."/>
            <person name="Stroud D."/>
            <person name="Mayhew G.F."/>
            <person name="Rose D.J."/>
            <person name="Zhou S."/>
            <person name="Schwartz D.C."/>
            <person name="Perna N.T."/>
            <person name="Mobley H.L.T."/>
            <person name="Donnenberg M.S."/>
            <person name="Blattner F.R."/>
        </authorList>
    </citation>
    <scope>NUCLEOTIDE SEQUENCE [LARGE SCALE GENOMIC DNA]</scope>
    <source>
        <strain>CFT073 / ATCC 700928 / UPEC</strain>
    </source>
</reference>
<sequence>MSRKMTGIVKTFDRKSGKGFIIPSDGRKEVQVHISAFTPRDAEVLIPGLRVEFCRVNGLRGPTAANVYLS</sequence>
<evidence type="ECO:0000250" key="1"/>
<accession>P0A983</accession>
<accession>P56253</accession>
<accession>Q9R3K1</accession>
<comment type="subcellular location">
    <subcellularLocation>
        <location evidence="1">Cytoplasm</location>
    </subcellularLocation>
</comment>
<feature type="chain" id="PRO_0000100268" description="Cold shock-like protein CspH">
    <location>
        <begin position="1"/>
        <end position="70"/>
    </location>
</feature>
<feature type="domain" description="CSD">
    <location>
        <begin position="7"/>
        <end position="67"/>
    </location>
</feature>
<proteinExistence type="inferred from homology"/>
<gene>
    <name type="primary">cspH</name>
    <name type="ordered locus">c1122</name>
</gene>
<dbReference type="EMBL" id="AE014075">
    <property type="protein sequence ID" value="AAN79590.1"/>
    <property type="molecule type" value="Genomic_DNA"/>
</dbReference>
<dbReference type="RefSeq" id="WP_000087763.1">
    <property type="nucleotide sequence ID" value="NZ_CP051263.1"/>
</dbReference>
<dbReference type="SMR" id="P0A983"/>
<dbReference type="STRING" id="199310.c1122"/>
<dbReference type="GeneID" id="93776424"/>
<dbReference type="KEGG" id="ecc:c1122"/>
<dbReference type="eggNOG" id="COG1278">
    <property type="taxonomic scope" value="Bacteria"/>
</dbReference>
<dbReference type="HOGENOM" id="CLU_117621_2_1_6"/>
<dbReference type="BioCyc" id="ECOL199310:C1122-MONOMER"/>
<dbReference type="Proteomes" id="UP000001410">
    <property type="component" value="Chromosome"/>
</dbReference>
<dbReference type="GO" id="GO:0005829">
    <property type="term" value="C:cytosol"/>
    <property type="evidence" value="ECO:0007669"/>
    <property type="project" value="UniProtKB-ARBA"/>
</dbReference>
<dbReference type="GO" id="GO:0003677">
    <property type="term" value="F:DNA binding"/>
    <property type="evidence" value="ECO:0007669"/>
    <property type="project" value="UniProtKB-KW"/>
</dbReference>
<dbReference type="CDD" id="cd04458">
    <property type="entry name" value="CSP_CDS"/>
    <property type="match status" value="1"/>
</dbReference>
<dbReference type="Gene3D" id="2.40.50.140">
    <property type="entry name" value="Nucleic acid-binding proteins"/>
    <property type="match status" value="1"/>
</dbReference>
<dbReference type="InterPro" id="IPR012156">
    <property type="entry name" value="Cold_shock_CspA"/>
</dbReference>
<dbReference type="InterPro" id="IPR050181">
    <property type="entry name" value="Cold_shock_domain"/>
</dbReference>
<dbReference type="InterPro" id="IPR011129">
    <property type="entry name" value="CSD"/>
</dbReference>
<dbReference type="InterPro" id="IPR019844">
    <property type="entry name" value="CSD_CS"/>
</dbReference>
<dbReference type="InterPro" id="IPR002059">
    <property type="entry name" value="CSP_DNA-bd"/>
</dbReference>
<dbReference type="InterPro" id="IPR012340">
    <property type="entry name" value="NA-bd_OB-fold"/>
</dbReference>
<dbReference type="NCBIfam" id="NF012007">
    <property type="entry name" value="PRK15463.1"/>
    <property type="match status" value="1"/>
</dbReference>
<dbReference type="NCBIfam" id="NF012008">
    <property type="entry name" value="PRK15464.1"/>
    <property type="match status" value="1"/>
</dbReference>
<dbReference type="PANTHER" id="PTHR11544">
    <property type="entry name" value="COLD SHOCK DOMAIN CONTAINING PROTEINS"/>
    <property type="match status" value="1"/>
</dbReference>
<dbReference type="Pfam" id="PF00313">
    <property type="entry name" value="CSD"/>
    <property type="match status" value="1"/>
</dbReference>
<dbReference type="PIRSF" id="PIRSF002599">
    <property type="entry name" value="Cold_shock_A"/>
    <property type="match status" value="1"/>
</dbReference>
<dbReference type="SMART" id="SM00357">
    <property type="entry name" value="CSP"/>
    <property type="match status" value="1"/>
</dbReference>
<dbReference type="SUPFAM" id="SSF50249">
    <property type="entry name" value="Nucleic acid-binding proteins"/>
    <property type="match status" value="1"/>
</dbReference>
<dbReference type="PROSITE" id="PS00352">
    <property type="entry name" value="CSD_1"/>
    <property type="match status" value="1"/>
</dbReference>
<dbReference type="PROSITE" id="PS51857">
    <property type="entry name" value="CSD_2"/>
    <property type="match status" value="1"/>
</dbReference>